<gene>
    <name type="primary">rskA</name>
    <name type="ordered locus">Mvan_4928</name>
</gene>
<protein>
    <recommendedName>
        <fullName>Anti-sigma-K factor RskA</fullName>
    </recommendedName>
    <alternativeName>
        <fullName>Regulator of SigK</fullName>
    </alternativeName>
    <alternativeName>
        <fullName>Sigma-K anti-sigma factor RskA</fullName>
    </alternativeName>
</protein>
<organism>
    <name type="scientific">Mycolicibacterium vanbaalenii (strain DSM 7251 / JCM 13017 / BCRC 16820 / KCTC 9966 / NRRL B-24157 / PYR-1)</name>
    <name type="common">Mycobacterium vanbaalenii</name>
    <dbReference type="NCBI Taxonomy" id="350058"/>
    <lineage>
        <taxon>Bacteria</taxon>
        <taxon>Bacillati</taxon>
        <taxon>Actinomycetota</taxon>
        <taxon>Actinomycetes</taxon>
        <taxon>Mycobacteriales</taxon>
        <taxon>Mycobacteriaceae</taxon>
        <taxon>Mycolicibacterium</taxon>
    </lineage>
</organism>
<proteinExistence type="inferred from homology"/>
<dbReference type="EMBL" id="CP000511">
    <property type="protein sequence ID" value="ABM15701.1"/>
    <property type="molecule type" value="Genomic_DNA"/>
</dbReference>
<dbReference type="RefSeq" id="WP_011782073.1">
    <property type="nucleotide sequence ID" value="NZ_JACKSD010000328.1"/>
</dbReference>
<dbReference type="SMR" id="A1TEV1"/>
<dbReference type="STRING" id="350058.Mvan_4928"/>
<dbReference type="KEGG" id="mva:Mvan_4928"/>
<dbReference type="eggNOG" id="COG5343">
    <property type="taxonomic scope" value="Bacteria"/>
</dbReference>
<dbReference type="HOGENOM" id="CLU_075802_1_1_11"/>
<dbReference type="Proteomes" id="UP000009159">
    <property type="component" value="Chromosome"/>
</dbReference>
<dbReference type="GO" id="GO:0005886">
    <property type="term" value="C:plasma membrane"/>
    <property type="evidence" value="ECO:0007669"/>
    <property type="project" value="UniProtKB-SubCell"/>
</dbReference>
<dbReference type="GO" id="GO:0016989">
    <property type="term" value="F:sigma factor antagonist activity"/>
    <property type="evidence" value="ECO:0007669"/>
    <property type="project" value="TreeGrafter"/>
</dbReference>
<dbReference type="GO" id="GO:0006417">
    <property type="term" value="P:regulation of translation"/>
    <property type="evidence" value="ECO:0007669"/>
    <property type="project" value="TreeGrafter"/>
</dbReference>
<dbReference type="Gene3D" id="1.10.10.1320">
    <property type="entry name" value="Anti-sigma factor, zinc-finger domain"/>
    <property type="match status" value="1"/>
</dbReference>
<dbReference type="InterPro" id="IPR051474">
    <property type="entry name" value="Anti-sigma-K/W_factor"/>
</dbReference>
<dbReference type="InterPro" id="IPR041916">
    <property type="entry name" value="Anti_sigma_zinc_sf"/>
</dbReference>
<dbReference type="InterPro" id="IPR018764">
    <property type="entry name" value="RskA_C"/>
</dbReference>
<dbReference type="InterPro" id="IPR053877">
    <property type="entry name" value="RskA_N"/>
</dbReference>
<dbReference type="PANTHER" id="PTHR37461">
    <property type="entry name" value="ANTI-SIGMA-K FACTOR RSKA"/>
    <property type="match status" value="1"/>
</dbReference>
<dbReference type="PANTHER" id="PTHR37461:SF1">
    <property type="entry name" value="ANTI-SIGMA-K FACTOR RSKA"/>
    <property type="match status" value="1"/>
</dbReference>
<dbReference type="Pfam" id="PF10099">
    <property type="entry name" value="RskA_C"/>
    <property type="match status" value="1"/>
</dbReference>
<dbReference type="Pfam" id="PF22618">
    <property type="entry name" value="RskA_N"/>
    <property type="match status" value="1"/>
</dbReference>
<feature type="chain" id="PRO_0000313838" description="Anti-sigma-K factor RskA">
    <location>
        <begin position="1"/>
        <end position="238"/>
    </location>
</feature>
<feature type="topological domain" description="Cytoplasmic" evidence="2">
    <location>
        <begin position="1"/>
        <end position="97"/>
    </location>
</feature>
<feature type="transmembrane region" description="Helical" evidence="2">
    <location>
        <begin position="98"/>
        <end position="118"/>
    </location>
</feature>
<feature type="topological domain" description="Extracellular" evidence="2">
    <location>
        <begin position="119"/>
        <end position="238"/>
    </location>
</feature>
<evidence type="ECO:0000250" key="1"/>
<evidence type="ECO:0000255" key="2"/>
<evidence type="ECO:0000305" key="3"/>
<keyword id="KW-1003">Cell membrane</keyword>
<keyword id="KW-0472">Membrane</keyword>
<keyword id="KW-0804">Transcription</keyword>
<keyword id="KW-0805">Transcription regulation</keyword>
<keyword id="KW-0812">Transmembrane</keyword>
<keyword id="KW-1133">Transmembrane helix</keyword>
<name>RSKA_MYCVP</name>
<comment type="function">
    <text evidence="1">An anti-sigma factor for extracytoplasmic function (ECF) sigma factor SigK. ECF sigma factors are held in an inactive form by an anti-sigma factor until released by regulated intramembrane proteolysis (RIP). RIP occurs when an extracytoplasmic signal triggers a concerted proteolytic cascade to transmit information and elicit cellular responses. The membrane-spanning regulatory substrate protein is first cut extracytoplasmically (site-1 protease, S1P), then within the membrane itself (site-2 protease, S2P, Rip1), while cytoplasmic proteases finish degrading the regulatory protein, liberating the sigma factor (By similarity).</text>
</comment>
<comment type="subcellular location">
    <subcellularLocation>
        <location evidence="3">Cell membrane</location>
        <topology evidence="3">Single-pass membrane protein</topology>
    </subcellularLocation>
</comment>
<comment type="domain">
    <text evidence="1">The cytosolic domain interacts with sigma factor SigK.</text>
</comment>
<comment type="similarity">
    <text evidence="3">Belongs to the anti-sigma-K factor family.</text>
</comment>
<accession>A1TEV1</accession>
<reference key="1">
    <citation type="submission" date="2006-12" db="EMBL/GenBank/DDBJ databases">
        <title>Complete sequence of Mycobacterium vanbaalenii PYR-1.</title>
        <authorList>
            <consortium name="US DOE Joint Genome Institute"/>
            <person name="Copeland A."/>
            <person name="Lucas S."/>
            <person name="Lapidus A."/>
            <person name="Barry K."/>
            <person name="Detter J.C."/>
            <person name="Glavina del Rio T."/>
            <person name="Hammon N."/>
            <person name="Israni S."/>
            <person name="Dalin E."/>
            <person name="Tice H."/>
            <person name="Pitluck S."/>
            <person name="Singan V."/>
            <person name="Schmutz J."/>
            <person name="Larimer F."/>
            <person name="Land M."/>
            <person name="Hauser L."/>
            <person name="Kyrpides N."/>
            <person name="Anderson I.J."/>
            <person name="Miller C."/>
            <person name="Richardson P."/>
        </authorList>
    </citation>
    <scope>NUCLEOTIDE SEQUENCE [LARGE SCALE GENOMIC DNA]</scope>
    <source>
        <strain>DSM 7251 / JCM 13017 / BCRC 16820 / KCTC 9966 / NRRL B-24157 / PYR-1</strain>
    </source>
</reference>
<sequence length="238" mass="24422">MTSPQNDLLSLATPYALHALSHAEAADIDRALNDAPPGVADAFLAEVRAVRETMAALASATAVEPPARMRDAVLRQIAEDPVRTLPVRSSSRRRAAAVLSAAAAVVIGLGTLAVGYALRPAPTPSTAEQVFAAPDVRTISGEIPGGGTATVVFSREQNSGVLVMNNVPPPQPGTVYQMWLVDADGSHSAGTMDAEAVAPSTTAVLPDLGSSRALAFTVEPPGGSTRPTTPVFAELPLT</sequence>